<organism>
    <name type="scientific">Phaeosphaeria nodorum (strain SN15 / ATCC MYA-4574 / FGSC 10173)</name>
    <name type="common">Glume blotch fungus</name>
    <name type="synonym">Parastagonospora nodorum</name>
    <dbReference type="NCBI Taxonomy" id="321614"/>
    <lineage>
        <taxon>Eukaryota</taxon>
        <taxon>Fungi</taxon>
        <taxon>Dikarya</taxon>
        <taxon>Ascomycota</taxon>
        <taxon>Pezizomycotina</taxon>
        <taxon>Dothideomycetes</taxon>
        <taxon>Pleosporomycetidae</taxon>
        <taxon>Pleosporales</taxon>
        <taxon>Pleosporineae</taxon>
        <taxon>Phaeosphaeriaceae</taxon>
        <taxon>Parastagonospora</taxon>
    </lineage>
</organism>
<proteinExistence type="inferred from homology"/>
<name>DBP7_PHANO</name>
<reference key="1">
    <citation type="journal article" date="2007" name="Plant Cell">
        <title>Dothideomycete-plant interactions illuminated by genome sequencing and EST analysis of the wheat pathogen Stagonospora nodorum.</title>
        <authorList>
            <person name="Hane J.K."/>
            <person name="Lowe R.G.T."/>
            <person name="Solomon P.S."/>
            <person name="Tan K.-C."/>
            <person name="Schoch C.L."/>
            <person name="Spatafora J.W."/>
            <person name="Crous P.W."/>
            <person name="Kodira C.D."/>
            <person name="Birren B.W."/>
            <person name="Galagan J.E."/>
            <person name="Torriani S.F.F."/>
            <person name="McDonald B.A."/>
            <person name="Oliver R.P."/>
        </authorList>
    </citation>
    <scope>NUCLEOTIDE SEQUENCE [LARGE SCALE GENOMIC DNA]</scope>
    <source>
        <strain>SN15 / ATCC MYA-4574 / FGSC 10173</strain>
    </source>
</reference>
<comment type="function">
    <text evidence="1">ATP-binding RNA helicase involved in the biogenesis of 60S ribosomal subunits and is required for the normal formation of 25S and 5.8S rRNAs.</text>
</comment>
<comment type="catalytic activity">
    <reaction>
        <text>ATP + H2O = ADP + phosphate + H(+)</text>
        <dbReference type="Rhea" id="RHEA:13065"/>
        <dbReference type="ChEBI" id="CHEBI:15377"/>
        <dbReference type="ChEBI" id="CHEBI:15378"/>
        <dbReference type="ChEBI" id="CHEBI:30616"/>
        <dbReference type="ChEBI" id="CHEBI:43474"/>
        <dbReference type="ChEBI" id="CHEBI:456216"/>
        <dbReference type="EC" id="3.6.4.13"/>
    </reaction>
</comment>
<comment type="subcellular location">
    <subcellularLocation>
        <location evidence="1">Nucleus</location>
        <location evidence="1">Nucleolus</location>
    </subcellularLocation>
</comment>
<comment type="domain">
    <text>The Q motif is unique to and characteristic of the DEAD box family of RNA helicases and controls ATP binding and hydrolysis.</text>
</comment>
<comment type="similarity">
    <text evidence="5">Belongs to the DEAD box helicase family. DDX31/DBP7 subfamily.</text>
</comment>
<feature type="chain" id="PRO_0000256027" description="ATP-dependent RNA helicase DBP7">
    <location>
        <begin position="1"/>
        <end position="831"/>
    </location>
</feature>
<feature type="domain" description="Helicase ATP-binding" evidence="2">
    <location>
        <begin position="218"/>
        <end position="419"/>
    </location>
</feature>
<feature type="domain" description="Helicase C-terminal" evidence="3">
    <location>
        <begin position="456"/>
        <end position="670"/>
    </location>
</feature>
<feature type="region of interest" description="Disordered" evidence="4">
    <location>
        <begin position="65"/>
        <end position="180"/>
    </location>
</feature>
<feature type="region of interest" description="Disordered" evidence="4">
    <location>
        <begin position="419"/>
        <end position="441"/>
    </location>
</feature>
<feature type="region of interest" description="Disordered" evidence="4">
    <location>
        <begin position="501"/>
        <end position="543"/>
    </location>
</feature>
<feature type="short sequence motif" description="Q motif">
    <location>
        <begin position="185"/>
        <end position="214"/>
    </location>
</feature>
<feature type="short sequence motif" description="DEAD box">
    <location>
        <begin position="353"/>
        <end position="356"/>
    </location>
</feature>
<feature type="compositionally biased region" description="Polar residues" evidence="4">
    <location>
        <begin position="65"/>
        <end position="75"/>
    </location>
</feature>
<feature type="compositionally biased region" description="Basic and acidic residues" evidence="4">
    <location>
        <begin position="82"/>
        <end position="112"/>
    </location>
</feature>
<feature type="compositionally biased region" description="Polar residues" evidence="4">
    <location>
        <begin position="146"/>
        <end position="162"/>
    </location>
</feature>
<feature type="compositionally biased region" description="Basic and acidic residues" evidence="4">
    <location>
        <begin position="501"/>
        <end position="512"/>
    </location>
</feature>
<feature type="binding site" evidence="2">
    <location>
        <begin position="231"/>
        <end position="238"/>
    </location>
    <ligand>
        <name>ATP</name>
        <dbReference type="ChEBI" id="CHEBI:30616"/>
    </ligand>
</feature>
<dbReference type="EC" id="3.6.4.13"/>
<dbReference type="EMBL" id="CH445337">
    <property type="protein sequence ID" value="EAT83905.1"/>
    <property type="molecule type" value="Genomic_DNA"/>
</dbReference>
<dbReference type="RefSeq" id="XP_001799045.1">
    <property type="nucleotide sequence ID" value="XM_001798993.1"/>
</dbReference>
<dbReference type="SMR" id="Q0UHM7"/>
<dbReference type="FunCoup" id="Q0UHM7">
    <property type="interactions" value="703"/>
</dbReference>
<dbReference type="STRING" id="321614.Q0UHM7"/>
<dbReference type="EnsemblFungi" id="SNOT_08737">
    <property type="protein sequence ID" value="SNOT_08737"/>
    <property type="gene ID" value="SNOG_08737"/>
</dbReference>
<dbReference type="GeneID" id="5975944"/>
<dbReference type="KEGG" id="pno:SNOG_08737"/>
<dbReference type="VEuPathDB" id="FungiDB:JI435_087370"/>
<dbReference type="eggNOG" id="KOG0348">
    <property type="taxonomic scope" value="Eukaryota"/>
</dbReference>
<dbReference type="HOGENOM" id="CLU_003041_26_2_1"/>
<dbReference type="InParanoid" id="Q0UHM7"/>
<dbReference type="OMA" id="AVHIKAD"/>
<dbReference type="OrthoDB" id="422663at2759"/>
<dbReference type="Proteomes" id="UP000001055">
    <property type="component" value="Unassembled WGS sequence"/>
</dbReference>
<dbReference type="GO" id="GO:0005730">
    <property type="term" value="C:nucleolus"/>
    <property type="evidence" value="ECO:0007669"/>
    <property type="project" value="UniProtKB-SubCell"/>
</dbReference>
<dbReference type="GO" id="GO:0005524">
    <property type="term" value="F:ATP binding"/>
    <property type="evidence" value="ECO:0007669"/>
    <property type="project" value="UniProtKB-KW"/>
</dbReference>
<dbReference type="GO" id="GO:0016887">
    <property type="term" value="F:ATP hydrolysis activity"/>
    <property type="evidence" value="ECO:0007669"/>
    <property type="project" value="RHEA"/>
</dbReference>
<dbReference type="GO" id="GO:0003723">
    <property type="term" value="F:RNA binding"/>
    <property type="evidence" value="ECO:0007669"/>
    <property type="project" value="UniProtKB-KW"/>
</dbReference>
<dbReference type="GO" id="GO:0003724">
    <property type="term" value="F:RNA helicase activity"/>
    <property type="evidence" value="ECO:0007669"/>
    <property type="project" value="UniProtKB-EC"/>
</dbReference>
<dbReference type="GO" id="GO:0000464">
    <property type="term" value="P:endonucleolytic cleavage in ITS1 upstream of 5.8S rRNA from tricistronic rRNA transcript (SSU-rRNA, 5.8S rRNA, LSU-rRNA)"/>
    <property type="evidence" value="ECO:0007669"/>
    <property type="project" value="EnsemblFungi"/>
</dbReference>
<dbReference type="CDD" id="cd17949">
    <property type="entry name" value="DEADc_DDX31"/>
    <property type="match status" value="1"/>
</dbReference>
<dbReference type="CDD" id="cd18787">
    <property type="entry name" value="SF2_C_DEAD"/>
    <property type="match status" value="1"/>
</dbReference>
<dbReference type="Gene3D" id="3.40.50.300">
    <property type="entry name" value="P-loop containing nucleotide triphosphate hydrolases"/>
    <property type="match status" value="2"/>
</dbReference>
<dbReference type="InterPro" id="IPR011545">
    <property type="entry name" value="DEAD/DEAH_box_helicase_dom"/>
</dbReference>
<dbReference type="InterPro" id="IPR014001">
    <property type="entry name" value="Helicase_ATP-bd"/>
</dbReference>
<dbReference type="InterPro" id="IPR001650">
    <property type="entry name" value="Helicase_C-like"/>
</dbReference>
<dbReference type="InterPro" id="IPR027417">
    <property type="entry name" value="P-loop_NTPase"/>
</dbReference>
<dbReference type="InterPro" id="IPR025313">
    <property type="entry name" value="SPB4-like_CTE"/>
</dbReference>
<dbReference type="PANTHER" id="PTHR24031">
    <property type="entry name" value="RNA HELICASE"/>
    <property type="match status" value="1"/>
</dbReference>
<dbReference type="Pfam" id="PF13959">
    <property type="entry name" value="CTE_SPB4"/>
    <property type="match status" value="1"/>
</dbReference>
<dbReference type="Pfam" id="PF00270">
    <property type="entry name" value="DEAD"/>
    <property type="match status" value="1"/>
</dbReference>
<dbReference type="Pfam" id="PF00271">
    <property type="entry name" value="Helicase_C"/>
    <property type="match status" value="1"/>
</dbReference>
<dbReference type="SMART" id="SM00487">
    <property type="entry name" value="DEXDc"/>
    <property type="match status" value="1"/>
</dbReference>
<dbReference type="SMART" id="SM01178">
    <property type="entry name" value="DUF4217"/>
    <property type="match status" value="1"/>
</dbReference>
<dbReference type="SMART" id="SM00490">
    <property type="entry name" value="HELICc"/>
    <property type="match status" value="1"/>
</dbReference>
<dbReference type="SUPFAM" id="SSF52540">
    <property type="entry name" value="P-loop containing nucleoside triphosphate hydrolases"/>
    <property type="match status" value="2"/>
</dbReference>
<dbReference type="PROSITE" id="PS51192">
    <property type="entry name" value="HELICASE_ATP_BIND_1"/>
    <property type="match status" value="1"/>
</dbReference>
<dbReference type="PROSITE" id="PS51194">
    <property type="entry name" value="HELICASE_CTER"/>
    <property type="match status" value="1"/>
</dbReference>
<dbReference type="PROSITE" id="PS51195">
    <property type="entry name" value="Q_MOTIF"/>
    <property type="match status" value="1"/>
</dbReference>
<accession>Q0UHM7</accession>
<gene>
    <name type="primary">DBP7</name>
    <name type="ORF">SNOG_08737</name>
</gene>
<keyword id="KW-0067">ATP-binding</keyword>
<keyword id="KW-0347">Helicase</keyword>
<keyword id="KW-0378">Hydrolase</keyword>
<keyword id="KW-0547">Nucleotide-binding</keyword>
<keyword id="KW-0539">Nucleus</keyword>
<keyword id="KW-0690">Ribosome biogenesis</keyword>
<keyword id="KW-0694">RNA-binding</keyword>
<keyword id="KW-0698">rRNA processing</keyword>
<sequence>MADDGMLLNFSIPETGILSRPSLKGGNWRDRAAAKKAAQNWHTKASARLTGEKVDKVAKKTVENATDVNRTQLGQRTRRASKSPEVHEDIDRPAKRARVSGDFRPKSNEKSAAEAGDYRPQINPGATQKPSERQSAPKGAKGGKQVISSLFTYNPTSTTKTQAPEKRHDEEPIEPSNAPLSSELDTFTSLGISTTLAAHLLKKMDLKAPTAIQKAAITQLVKDDSDAFIQAETGSGKTLAYLLPIVQRLMELSANMKKHKDDDAVQRNSGLFAIIMAPTRELSKQIALVLEKLLGCAHWLVATTVIGGEKKKSEKARLRKGINILVATPGRLADHLEHTEALDVSNVRWLVLDEGDRLMELGFEQEIQKIVGALNLRMRGNKTRIPGLPDKRTTVLCSATMKMDVERLGQISLKDAVHLRADPTEREQEGDEPQDERSYAPAQLKQSYAVVAPKLRLVSLIAYLKRAFTRKGSVMKAIVFVSCADSVDFHFDILTSNLEEKNEKAEGTKDDTEEKADDDEPKKSTKKPKAIPQADPTKLSVTHAESPVLSPKSHAVTAYRLHGSLQQSLRTSTLAHFTKNNDAAVLIATDVASRGLDLPNVDLVVEFDPAFAREDHLHRIGRTARAGRDGRACIFLMPGPEEGYVDILKTDRKDNEAGITITRQDADDILTRGLVTSGIATKNAYMDIAQDLQLNVERWALASPARLESARRAFQSHIRAYATHVADERKYFDIKSLHLGHLAKAFALRERPSGMKAPGLRTGAGRNDRTPAKIRGANAAKIGSAPAAKKAVDLDIPDAKDTEEAAKMRKAVRAREKFMRHAGMADEFNLG</sequence>
<protein>
    <recommendedName>
        <fullName>ATP-dependent RNA helicase DBP7</fullName>
        <ecNumber>3.6.4.13</ecNumber>
    </recommendedName>
</protein>
<evidence type="ECO:0000250" key="1"/>
<evidence type="ECO:0000255" key="2">
    <source>
        <dbReference type="PROSITE-ProRule" id="PRU00541"/>
    </source>
</evidence>
<evidence type="ECO:0000255" key="3">
    <source>
        <dbReference type="PROSITE-ProRule" id="PRU00542"/>
    </source>
</evidence>
<evidence type="ECO:0000256" key="4">
    <source>
        <dbReference type="SAM" id="MobiDB-lite"/>
    </source>
</evidence>
<evidence type="ECO:0000305" key="5"/>